<proteinExistence type="inferred from homology"/>
<feature type="chain" id="PRO_1000077191" description="Serine--tRNA ligase">
    <location>
        <begin position="1"/>
        <end position="426"/>
    </location>
</feature>
<feature type="binding site" evidence="1">
    <location>
        <begin position="227"/>
        <end position="229"/>
    </location>
    <ligand>
        <name>L-serine</name>
        <dbReference type="ChEBI" id="CHEBI:33384"/>
    </ligand>
</feature>
<feature type="binding site" evidence="1">
    <location>
        <begin position="258"/>
        <end position="260"/>
    </location>
    <ligand>
        <name>ATP</name>
        <dbReference type="ChEBI" id="CHEBI:30616"/>
    </ligand>
</feature>
<feature type="binding site" evidence="1">
    <location>
        <position position="274"/>
    </location>
    <ligand>
        <name>ATP</name>
        <dbReference type="ChEBI" id="CHEBI:30616"/>
    </ligand>
</feature>
<feature type="binding site" evidence="1">
    <location>
        <position position="281"/>
    </location>
    <ligand>
        <name>L-serine</name>
        <dbReference type="ChEBI" id="CHEBI:33384"/>
    </ligand>
</feature>
<feature type="binding site" evidence="1">
    <location>
        <begin position="345"/>
        <end position="348"/>
    </location>
    <ligand>
        <name>ATP</name>
        <dbReference type="ChEBI" id="CHEBI:30616"/>
    </ligand>
</feature>
<feature type="binding site" evidence="1">
    <location>
        <position position="380"/>
    </location>
    <ligand>
        <name>L-serine</name>
        <dbReference type="ChEBI" id="CHEBI:33384"/>
    </ligand>
</feature>
<gene>
    <name evidence="1" type="primary">serS</name>
    <name type="ordered locus">CMS0429</name>
</gene>
<dbReference type="EC" id="6.1.1.11" evidence="1"/>
<dbReference type="EMBL" id="AM849034">
    <property type="protein sequence ID" value="CAQ00549.1"/>
    <property type="molecule type" value="Genomic_DNA"/>
</dbReference>
<dbReference type="RefSeq" id="WP_012297883.1">
    <property type="nucleotide sequence ID" value="NZ_MZMN01000003.1"/>
</dbReference>
<dbReference type="SMR" id="B0RCF1"/>
<dbReference type="STRING" id="31964.CMS0429"/>
<dbReference type="KEGG" id="cms:CMS0429"/>
<dbReference type="eggNOG" id="COG0172">
    <property type="taxonomic scope" value="Bacteria"/>
</dbReference>
<dbReference type="HOGENOM" id="CLU_023797_0_1_11"/>
<dbReference type="OrthoDB" id="9804647at2"/>
<dbReference type="UniPathway" id="UPA00906">
    <property type="reaction ID" value="UER00895"/>
</dbReference>
<dbReference type="Proteomes" id="UP000001318">
    <property type="component" value="Chromosome"/>
</dbReference>
<dbReference type="GO" id="GO:0005737">
    <property type="term" value="C:cytoplasm"/>
    <property type="evidence" value="ECO:0007669"/>
    <property type="project" value="UniProtKB-SubCell"/>
</dbReference>
<dbReference type="GO" id="GO:0005524">
    <property type="term" value="F:ATP binding"/>
    <property type="evidence" value="ECO:0007669"/>
    <property type="project" value="UniProtKB-UniRule"/>
</dbReference>
<dbReference type="GO" id="GO:0004828">
    <property type="term" value="F:serine-tRNA ligase activity"/>
    <property type="evidence" value="ECO:0007669"/>
    <property type="project" value="UniProtKB-UniRule"/>
</dbReference>
<dbReference type="GO" id="GO:0016260">
    <property type="term" value="P:selenocysteine biosynthetic process"/>
    <property type="evidence" value="ECO:0007669"/>
    <property type="project" value="UniProtKB-UniRule"/>
</dbReference>
<dbReference type="GO" id="GO:0006434">
    <property type="term" value="P:seryl-tRNA aminoacylation"/>
    <property type="evidence" value="ECO:0007669"/>
    <property type="project" value="UniProtKB-UniRule"/>
</dbReference>
<dbReference type="CDD" id="cd00770">
    <property type="entry name" value="SerRS_core"/>
    <property type="match status" value="1"/>
</dbReference>
<dbReference type="Gene3D" id="3.30.930.10">
    <property type="entry name" value="Bira Bifunctional Protein, Domain 2"/>
    <property type="match status" value="1"/>
</dbReference>
<dbReference type="Gene3D" id="1.10.287.40">
    <property type="entry name" value="Serine-tRNA synthetase, tRNA binding domain"/>
    <property type="match status" value="1"/>
</dbReference>
<dbReference type="HAMAP" id="MF_00176">
    <property type="entry name" value="Ser_tRNA_synth_type1"/>
    <property type="match status" value="1"/>
</dbReference>
<dbReference type="InterPro" id="IPR002314">
    <property type="entry name" value="aa-tRNA-synt_IIb"/>
</dbReference>
<dbReference type="InterPro" id="IPR006195">
    <property type="entry name" value="aa-tRNA-synth_II"/>
</dbReference>
<dbReference type="InterPro" id="IPR045864">
    <property type="entry name" value="aa-tRNA-synth_II/BPL/LPL"/>
</dbReference>
<dbReference type="InterPro" id="IPR002317">
    <property type="entry name" value="Ser-tRNA-ligase_type_1"/>
</dbReference>
<dbReference type="InterPro" id="IPR015866">
    <property type="entry name" value="Ser-tRNA-synth_1_N"/>
</dbReference>
<dbReference type="InterPro" id="IPR042103">
    <property type="entry name" value="SerRS_1_N_sf"/>
</dbReference>
<dbReference type="InterPro" id="IPR033729">
    <property type="entry name" value="SerRS_core"/>
</dbReference>
<dbReference type="InterPro" id="IPR010978">
    <property type="entry name" value="tRNA-bd_arm"/>
</dbReference>
<dbReference type="NCBIfam" id="TIGR00414">
    <property type="entry name" value="serS"/>
    <property type="match status" value="1"/>
</dbReference>
<dbReference type="PANTHER" id="PTHR11778">
    <property type="entry name" value="SERYL-TRNA SYNTHETASE"/>
    <property type="match status" value="1"/>
</dbReference>
<dbReference type="Pfam" id="PF02403">
    <property type="entry name" value="Seryl_tRNA_N"/>
    <property type="match status" value="1"/>
</dbReference>
<dbReference type="Pfam" id="PF00587">
    <property type="entry name" value="tRNA-synt_2b"/>
    <property type="match status" value="1"/>
</dbReference>
<dbReference type="PIRSF" id="PIRSF001529">
    <property type="entry name" value="Ser-tRNA-synth_IIa"/>
    <property type="match status" value="1"/>
</dbReference>
<dbReference type="PRINTS" id="PR00981">
    <property type="entry name" value="TRNASYNTHSER"/>
</dbReference>
<dbReference type="SUPFAM" id="SSF55681">
    <property type="entry name" value="Class II aaRS and biotin synthetases"/>
    <property type="match status" value="1"/>
</dbReference>
<dbReference type="SUPFAM" id="SSF46589">
    <property type="entry name" value="tRNA-binding arm"/>
    <property type="match status" value="1"/>
</dbReference>
<dbReference type="PROSITE" id="PS50862">
    <property type="entry name" value="AA_TRNA_LIGASE_II"/>
    <property type="match status" value="1"/>
</dbReference>
<name>SYS_CLASE</name>
<accession>B0RCF1</accession>
<reference key="1">
    <citation type="journal article" date="2008" name="J. Bacteriol.">
        <title>Genome of the actinomycete plant pathogen Clavibacter michiganensis subsp. sepedonicus suggests recent niche adaptation.</title>
        <authorList>
            <person name="Bentley S.D."/>
            <person name="Corton C."/>
            <person name="Brown S.E."/>
            <person name="Barron A."/>
            <person name="Clark L."/>
            <person name="Doggett J."/>
            <person name="Harris B."/>
            <person name="Ormond D."/>
            <person name="Quail M.A."/>
            <person name="May G."/>
            <person name="Francis D."/>
            <person name="Knudson D."/>
            <person name="Parkhill J."/>
            <person name="Ishimaru C.A."/>
        </authorList>
    </citation>
    <scope>NUCLEOTIDE SEQUENCE [LARGE SCALE GENOMIC DNA]</scope>
    <source>
        <strain>ATCC 33113 / DSM 20744 / JCM 9667 / LMG 2889 / ICMP 2535 / C-1</strain>
    </source>
</reference>
<protein>
    <recommendedName>
        <fullName evidence="1">Serine--tRNA ligase</fullName>
        <ecNumber evidence="1">6.1.1.11</ecNumber>
    </recommendedName>
    <alternativeName>
        <fullName evidence="1">Seryl-tRNA synthetase</fullName>
        <shortName evidence="1">SerRS</shortName>
    </alternativeName>
    <alternativeName>
        <fullName evidence="1">Seryl-tRNA(Ser/Sec) synthetase</fullName>
    </alternativeName>
</protein>
<organism>
    <name type="scientific">Clavibacter sepedonicus</name>
    <name type="common">Clavibacter michiganensis subsp. sepedonicus</name>
    <dbReference type="NCBI Taxonomy" id="31964"/>
    <lineage>
        <taxon>Bacteria</taxon>
        <taxon>Bacillati</taxon>
        <taxon>Actinomycetota</taxon>
        <taxon>Actinomycetes</taxon>
        <taxon>Micrococcales</taxon>
        <taxon>Microbacteriaceae</taxon>
        <taxon>Clavibacter</taxon>
    </lineage>
</organism>
<evidence type="ECO:0000255" key="1">
    <source>
        <dbReference type="HAMAP-Rule" id="MF_00176"/>
    </source>
</evidence>
<keyword id="KW-0030">Aminoacyl-tRNA synthetase</keyword>
<keyword id="KW-0067">ATP-binding</keyword>
<keyword id="KW-0963">Cytoplasm</keyword>
<keyword id="KW-0436">Ligase</keyword>
<keyword id="KW-0547">Nucleotide-binding</keyword>
<keyword id="KW-0648">Protein biosynthesis</keyword>
<sequence>MIDPQTLRDHPDLVIASQELRGASVEVVDQAVAADSERRQAITEFEGLRAEQNAHGKLVAKADKADKPRLIAEVQELKARVTAAQERAQQAEAALDEAMRRIPNIVIDGVPAGGEDDWALLREVGEKAAFDFEPRDHLEIGEILDAIDMGRGAKVSGARFHFLKGIGARLEIALMNFGLARALEAGLVPLITPTLVKPEIMAGTGFLGAHADEVYHLDDDDLYLTGTSEVALAGYHADEILDLAAGPIRYAGWSTCYRKEAGSYGKDTRGIIRVHQFQKLEMFSYVDPADAEAEHERLLAMQERMMQDLGLAYRVIDTAAGDLGSSAARKYDVEAWIPTQGAYRELTSTSNCTTFQARRLGTRFRGEDGRTSPVATLNGTLATTRWIVAILETHQRADGSVRVPEALRPYLGGLEVLEPATAKAAR</sequence>
<comment type="function">
    <text evidence="1">Catalyzes the attachment of serine to tRNA(Ser). Is also able to aminoacylate tRNA(Sec) with serine, to form the misacylated tRNA L-seryl-tRNA(Sec), which will be further converted into selenocysteinyl-tRNA(Sec).</text>
</comment>
<comment type="catalytic activity">
    <reaction evidence="1">
        <text>tRNA(Ser) + L-serine + ATP = L-seryl-tRNA(Ser) + AMP + diphosphate + H(+)</text>
        <dbReference type="Rhea" id="RHEA:12292"/>
        <dbReference type="Rhea" id="RHEA-COMP:9669"/>
        <dbReference type="Rhea" id="RHEA-COMP:9703"/>
        <dbReference type="ChEBI" id="CHEBI:15378"/>
        <dbReference type="ChEBI" id="CHEBI:30616"/>
        <dbReference type="ChEBI" id="CHEBI:33019"/>
        <dbReference type="ChEBI" id="CHEBI:33384"/>
        <dbReference type="ChEBI" id="CHEBI:78442"/>
        <dbReference type="ChEBI" id="CHEBI:78533"/>
        <dbReference type="ChEBI" id="CHEBI:456215"/>
        <dbReference type="EC" id="6.1.1.11"/>
    </reaction>
</comment>
<comment type="catalytic activity">
    <reaction evidence="1">
        <text>tRNA(Sec) + L-serine + ATP = L-seryl-tRNA(Sec) + AMP + diphosphate + H(+)</text>
        <dbReference type="Rhea" id="RHEA:42580"/>
        <dbReference type="Rhea" id="RHEA-COMP:9742"/>
        <dbReference type="Rhea" id="RHEA-COMP:10128"/>
        <dbReference type="ChEBI" id="CHEBI:15378"/>
        <dbReference type="ChEBI" id="CHEBI:30616"/>
        <dbReference type="ChEBI" id="CHEBI:33019"/>
        <dbReference type="ChEBI" id="CHEBI:33384"/>
        <dbReference type="ChEBI" id="CHEBI:78442"/>
        <dbReference type="ChEBI" id="CHEBI:78533"/>
        <dbReference type="ChEBI" id="CHEBI:456215"/>
        <dbReference type="EC" id="6.1.1.11"/>
    </reaction>
</comment>
<comment type="pathway">
    <text evidence="1">Aminoacyl-tRNA biosynthesis; selenocysteinyl-tRNA(Sec) biosynthesis; L-seryl-tRNA(Sec) from L-serine and tRNA(Sec): step 1/1.</text>
</comment>
<comment type="subunit">
    <text evidence="1">Homodimer. The tRNA molecule binds across the dimer.</text>
</comment>
<comment type="subcellular location">
    <subcellularLocation>
        <location evidence="1">Cytoplasm</location>
    </subcellularLocation>
</comment>
<comment type="domain">
    <text evidence="1">Consists of two distinct domains, a catalytic core and a N-terminal extension that is involved in tRNA binding.</text>
</comment>
<comment type="similarity">
    <text evidence="1">Belongs to the class-II aminoacyl-tRNA synthetase family. Type-1 seryl-tRNA synthetase subfamily.</text>
</comment>